<name>ARGB_EHRRW</name>
<comment type="function">
    <text evidence="1">Catalyzes the ATP-dependent phosphorylation of N-acetyl-L-glutamate.</text>
</comment>
<comment type="catalytic activity">
    <reaction evidence="1">
        <text>N-acetyl-L-glutamate + ATP = N-acetyl-L-glutamyl 5-phosphate + ADP</text>
        <dbReference type="Rhea" id="RHEA:14629"/>
        <dbReference type="ChEBI" id="CHEBI:30616"/>
        <dbReference type="ChEBI" id="CHEBI:44337"/>
        <dbReference type="ChEBI" id="CHEBI:57936"/>
        <dbReference type="ChEBI" id="CHEBI:456216"/>
        <dbReference type="EC" id="2.7.2.8"/>
    </reaction>
</comment>
<comment type="pathway">
    <text evidence="1">Amino-acid biosynthesis; L-arginine biosynthesis; N(2)-acetyl-L-ornithine from L-glutamate: step 2/4.</text>
</comment>
<comment type="subcellular location">
    <subcellularLocation>
        <location evidence="1">Cytoplasm</location>
    </subcellularLocation>
</comment>
<comment type="similarity">
    <text evidence="1">Belongs to the acetylglutamate kinase family. ArgB subfamily.</text>
</comment>
<comment type="sequence caution" evidence="2">
    <conflict type="erroneous initiation">
        <sequence resource="EMBL-CDS" id="CAH58176"/>
    </conflict>
</comment>
<comment type="sequence caution" evidence="2">
    <conflict type="erroneous initiation">
        <sequence resource="EMBL-CDS" id="CAI26964"/>
    </conflict>
</comment>
<sequence length="322" mass="34878">MKLRNVSKNNLNKEDTKLSIEQFGGNVEWFNITKTLSESLPYIQQFSGETFIIKYGGAAMTDKKLAESFAHDVVLLKQLGINPIVVHGGGNKINEFLEKINKKSTFINGLRITDAETLEIVEMVLCGLVNKNITQLINNAGGNAIGLCGKDANLIEAKKICYTYKENQSNNVEKILDMGFVGEPHDINTDLLFFMEESDFIPVIAPVCSGENNLTYNVNADLVAGALANAMAAAKLIILTNVSGVTDSNGNLISELSVSHAENLIDNGTAHTGMIPKLQTCVRVVKEGYGSAHIIDGRIPHVLLLELFTIHGTGTMVVNSGV</sequence>
<feature type="chain" id="PRO_0000264705" description="Acetylglutamate kinase">
    <location>
        <begin position="1"/>
        <end position="322"/>
    </location>
</feature>
<feature type="binding site" evidence="1">
    <location>
        <begin position="89"/>
        <end position="90"/>
    </location>
    <ligand>
        <name>substrate</name>
    </ligand>
</feature>
<feature type="binding site" evidence="1">
    <location>
        <position position="111"/>
    </location>
    <ligand>
        <name>substrate</name>
    </ligand>
</feature>
<feature type="binding site" evidence="1">
    <location>
        <position position="217"/>
    </location>
    <ligand>
        <name>substrate</name>
    </ligand>
</feature>
<feature type="site" description="Transition state stabilizer" evidence="1">
    <location>
        <position position="54"/>
    </location>
</feature>
<feature type="site" description="Transition state stabilizer" evidence="1">
    <location>
        <position position="277"/>
    </location>
</feature>
<protein>
    <recommendedName>
        <fullName evidence="1">Acetylglutamate kinase</fullName>
        <ecNumber evidence="1">2.7.2.8</ecNumber>
    </recommendedName>
    <alternativeName>
        <fullName evidence="1">N-acetyl-L-glutamate 5-phosphotransferase</fullName>
    </alternativeName>
    <alternativeName>
        <fullName evidence="1">NAG kinase</fullName>
        <shortName evidence="1">NAGK</shortName>
    </alternativeName>
</protein>
<dbReference type="EC" id="2.7.2.8" evidence="1"/>
<dbReference type="EMBL" id="CR767821">
    <property type="protein sequence ID" value="CAH58176.1"/>
    <property type="status" value="ALT_INIT"/>
    <property type="molecule type" value="Genomic_DNA"/>
</dbReference>
<dbReference type="EMBL" id="CR925678">
    <property type="protein sequence ID" value="CAI26964.1"/>
    <property type="status" value="ALT_INIT"/>
    <property type="molecule type" value="Genomic_DNA"/>
</dbReference>
<dbReference type="RefSeq" id="WP_011256090.1">
    <property type="nucleotide sequence ID" value="NC_005295.2"/>
</dbReference>
<dbReference type="SMR" id="Q5HB82"/>
<dbReference type="GeneID" id="33057976"/>
<dbReference type="KEGG" id="eru:Erum4480"/>
<dbReference type="KEGG" id="erw:ERWE_CDS_04700"/>
<dbReference type="eggNOG" id="COG0548">
    <property type="taxonomic scope" value="Bacteria"/>
</dbReference>
<dbReference type="HOGENOM" id="CLU_053680_0_0_5"/>
<dbReference type="UniPathway" id="UPA00068">
    <property type="reaction ID" value="UER00107"/>
</dbReference>
<dbReference type="Proteomes" id="UP000001021">
    <property type="component" value="Chromosome"/>
</dbReference>
<dbReference type="GO" id="GO:0005737">
    <property type="term" value="C:cytoplasm"/>
    <property type="evidence" value="ECO:0007669"/>
    <property type="project" value="UniProtKB-SubCell"/>
</dbReference>
<dbReference type="GO" id="GO:0003991">
    <property type="term" value="F:acetylglutamate kinase activity"/>
    <property type="evidence" value="ECO:0007669"/>
    <property type="project" value="UniProtKB-UniRule"/>
</dbReference>
<dbReference type="GO" id="GO:0005524">
    <property type="term" value="F:ATP binding"/>
    <property type="evidence" value="ECO:0007669"/>
    <property type="project" value="UniProtKB-UniRule"/>
</dbReference>
<dbReference type="GO" id="GO:0042450">
    <property type="term" value="P:arginine biosynthetic process via ornithine"/>
    <property type="evidence" value="ECO:0007669"/>
    <property type="project" value="UniProtKB-UniRule"/>
</dbReference>
<dbReference type="GO" id="GO:0006526">
    <property type="term" value="P:L-arginine biosynthetic process"/>
    <property type="evidence" value="ECO:0007669"/>
    <property type="project" value="UniProtKB-UniPathway"/>
</dbReference>
<dbReference type="CDD" id="cd04250">
    <property type="entry name" value="AAK_NAGK-C"/>
    <property type="match status" value="1"/>
</dbReference>
<dbReference type="FunFam" id="3.40.1160.10:FF:000004">
    <property type="entry name" value="Acetylglutamate kinase"/>
    <property type="match status" value="1"/>
</dbReference>
<dbReference type="Gene3D" id="3.40.1160.10">
    <property type="entry name" value="Acetylglutamate kinase-like"/>
    <property type="match status" value="1"/>
</dbReference>
<dbReference type="HAMAP" id="MF_00082">
    <property type="entry name" value="ArgB"/>
    <property type="match status" value="1"/>
</dbReference>
<dbReference type="InterPro" id="IPR036393">
    <property type="entry name" value="AceGlu_kinase-like_sf"/>
</dbReference>
<dbReference type="InterPro" id="IPR004662">
    <property type="entry name" value="AcgluKinase_fam"/>
</dbReference>
<dbReference type="InterPro" id="IPR037528">
    <property type="entry name" value="ArgB"/>
</dbReference>
<dbReference type="InterPro" id="IPR001048">
    <property type="entry name" value="Asp/Glu/Uridylate_kinase"/>
</dbReference>
<dbReference type="InterPro" id="IPR041727">
    <property type="entry name" value="NAGK-C"/>
</dbReference>
<dbReference type="NCBIfam" id="TIGR00761">
    <property type="entry name" value="argB"/>
    <property type="match status" value="1"/>
</dbReference>
<dbReference type="PANTHER" id="PTHR23342">
    <property type="entry name" value="N-ACETYLGLUTAMATE SYNTHASE"/>
    <property type="match status" value="1"/>
</dbReference>
<dbReference type="PANTHER" id="PTHR23342:SF0">
    <property type="entry name" value="N-ACETYLGLUTAMATE SYNTHASE, MITOCHONDRIAL"/>
    <property type="match status" value="1"/>
</dbReference>
<dbReference type="Pfam" id="PF00696">
    <property type="entry name" value="AA_kinase"/>
    <property type="match status" value="1"/>
</dbReference>
<dbReference type="PIRSF" id="PIRSF000728">
    <property type="entry name" value="NAGK"/>
    <property type="match status" value="1"/>
</dbReference>
<dbReference type="SUPFAM" id="SSF53633">
    <property type="entry name" value="Carbamate kinase-like"/>
    <property type="match status" value="1"/>
</dbReference>
<accession>Q5HB82</accession>
<accession>Q5FEK2</accession>
<organism>
    <name type="scientific">Ehrlichia ruminantium (strain Welgevonden)</name>
    <dbReference type="NCBI Taxonomy" id="254945"/>
    <lineage>
        <taxon>Bacteria</taxon>
        <taxon>Pseudomonadati</taxon>
        <taxon>Pseudomonadota</taxon>
        <taxon>Alphaproteobacteria</taxon>
        <taxon>Rickettsiales</taxon>
        <taxon>Anaplasmataceae</taxon>
        <taxon>Ehrlichia</taxon>
    </lineage>
</organism>
<reference key="1">
    <citation type="journal article" date="2005" name="Proc. Natl. Acad. Sci. U.S.A.">
        <title>The genome of the heartwater agent Ehrlichia ruminantium contains multiple tandem repeats of actively variable copy number.</title>
        <authorList>
            <person name="Collins N.E."/>
            <person name="Liebenberg J."/>
            <person name="de Villiers E.P."/>
            <person name="Brayton K.A."/>
            <person name="Louw E."/>
            <person name="Pretorius A."/>
            <person name="Faber F.E."/>
            <person name="van Heerden H."/>
            <person name="Josemans A."/>
            <person name="van Kleef M."/>
            <person name="Steyn H.C."/>
            <person name="van Strijp M.F."/>
            <person name="Zweygarth E."/>
            <person name="Jongejan F."/>
            <person name="Maillard J.C."/>
            <person name="Berthier D."/>
            <person name="Botha M."/>
            <person name="Joubert F."/>
            <person name="Corton C.H."/>
            <person name="Thomson N.R."/>
            <person name="Allsopp M.T."/>
            <person name="Allsopp B.A."/>
        </authorList>
    </citation>
    <scope>NUCLEOTIDE SEQUENCE [LARGE SCALE GENOMIC DNA]</scope>
    <source>
        <strain>Welgevonden</strain>
    </source>
</reference>
<reference key="2">
    <citation type="journal article" date="2006" name="J. Bacteriol.">
        <title>Comparative genomic analysis of three strains of Ehrlichia ruminantium reveals an active process of genome size plasticity.</title>
        <authorList>
            <person name="Frutos R."/>
            <person name="Viari A."/>
            <person name="Ferraz C."/>
            <person name="Morgat A."/>
            <person name="Eychenie S."/>
            <person name="Kandassamy Y."/>
            <person name="Chantal I."/>
            <person name="Bensaid A."/>
            <person name="Coissac E."/>
            <person name="Vachiery N."/>
            <person name="Demaille J."/>
            <person name="Martinez D."/>
        </authorList>
    </citation>
    <scope>NUCLEOTIDE SEQUENCE [LARGE SCALE GENOMIC DNA]</scope>
    <source>
        <strain>Welgevonden</strain>
    </source>
</reference>
<keyword id="KW-0028">Amino-acid biosynthesis</keyword>
<keyword id="KW-0055">Arginine biosynthesis</keyword>
<keyword id="KW-0067">ATP-binding</keyword>
<keyword id="KW-0963">Cytoplasm</keyword>
<keyword id="KW-0418">Kinase</keyword>
<keyword id="KW-0547">Nucleotide-binding</keyword>
<keyword id="KW-0808">Transferase</keyword>
<gene>
    <name evidence="1" type="primary">argB</name>
    <name type="ordered locus">Erum4480</name>
    <name type="ordered locus">ERWE_CDS_04700</name>
</gene>
<evidence type="ECO:0000255" key="1">
    <source>
        <dbReference type="HAMAP-Rule" id="MF_00082"/>
    </source>
</evidence>
<evidence type="ECO:0000305" key="2"/>
<proteinExistence type="inferred from homology"/>